<feature type="chain" id="PRO_0000308865" description="DNA-directed RNA polymerase subunit beta'">
    <location>
        <begin position="1"/>
        <end position="1403"/>
    </location>
</feature>
<feature type="region of interest" description="Disordered" evidence="2">
    <location>
        <begin position="687"/>
        <end position="708"/>
    </location>
</feature>
<feature type="region of interest" description="Disordered" evidence="2">
    <location>
        <begin position="1381"/>
        <end position="1403"/>
    </location>
</feature>
<feature type="compositionally biased region" description="Basic and acidic residues" evidence="2">
    <location>
        <begin position="695"/>
        <end position="706"/>
    </location>
</feature>
<feature type="binding site" evidence="1">
    <location>
        <position position="70"/>
    </location>
    <ligand>
        <name>Zn(2+)</name>
        <dbReference type="ChEBI" id="CHEBI:29105"/>
        <label>1</label>
    </ligand>
</feature>
<feature type="binding site" evidence="1">
    <location>
        <position position="72"/>
    </location>
    <ligand>
        <name>Zn(2+)</name>
        <dbReference type="ChEBI" id="CHEBI:29105"/>
        <label>1</label>
    </ligand>
</feature>
<feature type="binding site" evidence="1">
    <location>
        <position position="85"/>
    </location>
    <ligand>
        <name>Zn(2+)</name>
        <dbReference type="ChEBI" id="CHEBI:29105"/>
        <label>1</label>
    </ligand>
</feature>
<feature type="binding site" evidence="1">
    <location>
        <position position="88"/>
    </location>
    <ligand>
        <name>Zn(2+)</name>
        <dbReference type="ChEBI" id="CHEBI:29105"/>
        <label>1</label>
    </ligand>
</feature>
<feature type="binding site" evidence="1">
    <location>
        <position position="461"/>
    </location>
    <ligand>
        <name>Mg(2+)</name>
        <dbReference type="ChEBI" id="CHEBI:18420"/>
    </ligand>
</feature>
<feature type="binding site" evidence="1">
    <location>
        <position position="463"/>
    </location>
    <ligand>
        <name>Mg(2+)</name>
        <dbReference type="ChEBI" id="CHEBI:18420"/>
    </ligand>
</feature>
<feature type="binding site" evidence="1">
    <location>
        <position position="465"/>
    </location>
    <ligand>
        <name>Mg(2+)</name>
        <dbReference type="ChEBI" id="CHEBI:18420"/>
    </ligand>
</feature>
<feature type="binding site" evidence="1">
    <location>
        <position position="805"/>
    </location>
    <ligand>
        <name>Zn(2+)</name>
        <dbReference type="ChEBI" id="CHEBI:29105"/>
        <label>2</label>
    </ligand>
</feature>
<feature type="binding site" evidence="1">
    <location>
        <position position="879"/>
    </location>
    <ligand>
        <name>Zn(2+)</name>
        <dbReference type="ChEBI" id="CHEBI:29105"/>
        <label>2</label>
    </ligand>
</feature>
<feature type="binding site" evidence="1">
    <location>
        <position position="886"/>
    </location>
    <ligand>
        <name>Zn(2+)</name>
        <dbReference type="ChEBI" id="CHEBI:29105"/>
        <label>2</label>
    </ligand>
</feature>
<feature type="binding site" evidence="1">
    <location>
        <position position="889"/>
    </location>
    <ligand>
        <name>Zn(2+)</name>
        <dbReference type="ChEBI" id="CHEBI:29105"/>
        <label>2</label>
    </ligand>
</feature>
<sequence>MKDIFNFFEKPKDPLSFNAIRIALASPDKIRQWSHGEVKKPETINYRTFKPERDGLFCARIFGPVKDYECNCGKYKRMKHRGVVCEKCGVEVIQSKVRRERLGHITLATPVAHIWFLKSLPSRIGNLLDITLKELEKVLYCESYIVLDPKATPLQKGELISEDKMHRLYQEHGEDSFTTGMGGEAVREMLKSLDVEKLSEELRKDMRETTSEAKRKKYAKRLKVAEAFRVSGNKPEWMMLDVIPVIPPDLRPLVPLDGGRFATSDLNDLYRRVINRNNRLKRLQELNAPDIIIRNEKRMLQEAVDALFDNGRRGKTITGPNKRPLKSLSDMLKGKQGRFRQNLLGKRVDYSGRSVIVVGPELRLHQCGLPKIMALELFKPFIYNKLEEKGYVTTIKSAKKMVEKERPEVWDILEDVIREHPVLLNRAPTLHRLGMQAFEPVLIEGKAIQLHPLVCAAFNADFDGDQMAVHVPLSIEAQMEARVLMMSTNNILSPANGKPIIVPTQDMVLGIYYMTRAREFAGGEGRVFASPDEVRAAYDHGEVHLQAKVVCRIDGKRKETTVGRVLLWEVVPRAVGFDAINKVLDKKSLGGLIDLCYRLTGEKETVLLADRVRSLGYYNATRAGISIALKDMIIPAKKQEFLDFARKEVSEIENQYLEGLITDGERYNKVIDIWAEITEKVAQEMMQQISQEETTGDRDGKRETRKQPSFNPIYIMADSGARGSAQQIRQLAGMRGLMAKPSGEIIETPITANFREGLSVLQYFISTHGARKGLADTALKTANSGYLTRRLVDVAQDAIINEYDCGTMDGLFIGALVEGGEIIEPLGERILGRVALDDILDPVTGEVLVRANEEIDEDRVRRIENSGMDKVKIRSVLTCQAKRGICVECYGRDLARGRKVSVGEAVGVIAAQSIGEPGTQLTMRTFHIGGAATRRAEQSSLENRYAGSVKFAGLVTVQKTDGTLVAMNRNGEIVVVDDSGRERERYQVIYGARILVKEGQRIEPGVLMAEWDPFAIPLLTEVGGVVRYEDIIEGVTMSEALDEVTGLSRKTVIESKDPEARPRVTIRDANGNMMDLPSSRNPASYFLPQGSIITVNDGDEIHPGEVIAKVPRETTKTKDITGGLPRVAELFEARKPKDAAAIAEIDGVVSFGKDTKGKRKLIITPEVNGEQRTDLAKEYLISKGKNISVHSGDRVKAGEAMMDGSANPHDILKVLGEKELARYLVDEVQEVYRLQGVKINDKHIETIVRQMLRRVRVTDVGDTNFLVDEQVEKWVFEEENEKVMSEGKRPAVGEPLLLGITKASLSTESFISASSFQETTKVLTEAAINGKVDYLRGLKENVIMGRLIPAGTGLPNYKHLDIAVESPTDEVNEMEAALAATHGDTGPLGEPSRPVGTQTTGAA</sequence>
<comment type="function">
    <text evidence="1">DNA-dependent RNA polymerase catalyzes the transcription of DNA into RNA using the four ribonucleoside triphosphates as substrates.</text>
</comment>
<comment type="catalytic activity">
    <reaction evidence="1">
        <text>RNA(n) + a ribonucleoside 5'-triphosphate = RNA(n+1) + diphosphate</text>
        <dbReference type="Rhea" id="RHEA:21248"/>
        <dbReference type="Rhea" id="RHEA-COMP:14527"/>
        <dbReference type="Rhea" id="RHEA-COMP:17342"/>
        <dbReference type="ChEBI" id="CHEBI:33019"/>
        <dbReference type="ChEBI" id="CHEBI:61557"/>
        <dbReference type="ChEBI" id="CHEBI:140395"/>
        <dbReference type="EC" id="2.7.7.6"/>
    </reaction>
</comment>
<comment type="cofactor">
    <cofactor evidence="1">
        <name>Mg(2+)</name>
        <dbReference type="ChEBI" id="CHEBI:18420"/>
    </cofactor>
    <text evidence="1">Binds 1 Mg(2+) ion per subunit.</text>
</comment>
<comment type="cofactor">
    <cofactor evidence="1">
        <name>Zn(2+)</name>
        <dbReference type="ChEBI" id="CHEBI:29105"/>
    </cofactor>
    <text evidence="1">Binds 2 Zn(2+) ions per subunit.</text>
</comment>
<comment type="subunit">
    <text evidence="1">The RNAP catalytic core consists of 2 alpha, 1 beta, 1 beta' and 1 omega subunit. When a sigma factor is associated with the core the holoenzyme is formed, which can initiate transcription.</text>
</comment>
<comment type="similarity">
    <text evidence="1">Belongs to the RNA polymerase beta' chain family.</text>
</comment>
<proteinExistence type="inferred from homology"/>
<protein>
    <recommendedName>
        <fullName evidence="1">DNA-directed RNA polymerase subunit beta'</fullName>
        <shortName evidence="1">RNAP subunit beta'</shortName>
        <ecNumber evidence="1">2.7.7.6</ecNumber>
    </recommendedName>
    <alternativeName>
        <fullName evidence="1">RNA polymerase subunit beta'</fullName>
    </alternativeName>
    <alternativeName>
        <fullName evidence="1">Transcriptase subunit beta'</fullName>
    </alternativeName>
</protein>
<organism>
    <name type="scientific">Myxococcus xanthus (strain DK1622)</name>
    <dbReference type="NCBI Taxonomy" id="246197"/>
    <lineage>
        <taxon>Bacteria</taxon>
        <taxon>Pseudomonadati</taxon>
        <taxon>Myxococcota</taxon>
        <taxon>Myxococcia</taxon>
        <taxon>Myxococcales</taxon>
        <taxon>Cystobacterineae</taxon>
        <taxon>Myxococcaceae</taxon>
        <taxon>Myxococcus</taxon>
    </lineage>
</organism>
<accession>Q1D7U2</accession>
<keyword id="KW-0240">DNA-directed RNA polymerase</keyword>
<keyword id="KW-0460">Magnesium</keyword>
<keyword id="KW-0479">Metal-binding</keyword>
<keyword id="KW-0548">Nucleotidyltransferase</keyword>
<keyword id="KW-1185">Reference proteome</keyword>
<keyword id="KW-0804">Transcription</keyword>
<keyword id="KW-0808">Transferase</keyword>
<keyword id="KW-0862">Zinc</keyword>
<gene>
    <name evidence="1" type="primary">rpoC</name>
    <name type="ordered locus">MXAN_3078</name>
</gene>
<name>RPOC_MYXXD</name>
<evidence type="ECO:0000255" key="1">
    <source>
        <dbReference type="HAMAP-Rule" id="MF_01322"/>
    </source>
</evidence>
<evidence type="ECO:0000256" key="2">
    <source>
        <dbReference type="SAM" id="MobiDB-lite"/>
    </source>
</evidence>
<reference key="1">
    <citation type="journal article" date="2006" name="Proc. Natl. Acad. Sci. U.S.A.">
        <title>Evolution of sensory complexity recorded in a myxobacterial genome.</title>
        <authorList>
            <person name="Goldman B.S."/>
            <person name="Nierman W.C."/>
            <person name="Kaiser D."/>
            <person name="Slater S.C."/>
            <person name="Durkin A.S."/>
            <person name="Eisen J.A."/>
            <person name="Ronning C.M."/>
            <person name="Barbazuk W.B."/>
            <person name="Blanchard M."/>
            <person name="Field C."/>
            <person name="Halling C."/>
            <person name="Hinkle G."/>
            <person name="Iartchuk O."/>
            <person name="Kim H.S."/>
            <person name="Mackenzie C."/>
            <person name="Madupu R."/>
            <person name="Miller N."/>
            <person name="Shvartsbeyn A."/>
            <person name="Sullivan S.A."/>
            <person name="Vaudin M."/>
            <person name="Wiegand R."/>
            <person name="Kaplan H.B."/>
        </authorList>
    </citation>
    <scope>NUCLEOTIDE SEQUENCE [LARGE SCALE GENOMIC DNA]</scope>
    <source>
        <strain>DK1622</strain>
    </source>
</reference>
<dbReference type="EC" id="2.7.7.6" evidence="1"/>
<dbReference type="EMBL" id="CP000113">
    <property type="protein sequence ID" value="ABF88775.1"/>
    <property type="molecule type" value="Genomic_DNA"/>
</dbReference>
<dbReference type="RefSeq" id="WP_011553128.1">
    <property type="nucleotide sequence ID" value="NC_008095.1"/>
</dbReference>
<dbReference type="SMR" id="Q1D7U2"/>
<dbReference type="STRING" id="246197.MXAN_3078"/>
<dbReference type="EnsemblBacteria" id="ABF88775">
    <property type="protein sequence ID" value="ABF88775"/>
    <property type="gene ID" value="MXAN_3078"/>
</dbReference>
<dbReference type="GeneID" id="41360440"/>
<dbReference type="KEGG" id="mxa:MXAN_3078"/>
<dbReference type="eggNOG" id="COG0086">
    <property type="taxonomic scope" value="Bacteria"/>
</dbReference>
<dbReference type="HOGENOM" id="CLU_000524_3_1_7"/>
<dbReference type="OrthoDB" id="9815296at2"/>
<dbReference type="Proteomes" id="UP000002402">
    <property type="component" value="Chromosome"/>
</dbReference>
<dbReference type="GO" id="GO:0000428">
    <property type="term" value="C:DNA-directed RNA polymerase complex"/>
    <property type="evidence" value="ECO:0007669"/>
    <property type="project" value="UniProtKB-KW"/>
</dbReference>
<dbReference type="GO" id="GO:0003677">
    <property type="term" value="F:DNA binding"/>
    <property type="evidence" value="ECO:0007669"/>
    <property type="project" value="UniProtKB-UniRule"/>
</dbReference>
<dbReference type="GO" id="GO:0003899">
    <property type="term" value="F:DNA-directed RNA polymerase activity"/>
    <property type="evidence" value="ECO:0007669"/>
    <property type="project" value="UniProtKB-UniRule"/>
</dbReference>
<dbReference type="GO" id="GO:0000287">
    <property type="term" value="F:magnesium ion binding"/>
    <property type="evidence" value="ECO:0007669"/>
    <property type="project" value="UniProtKB-UniRule"/>
</dbReference>
<dbReference type="GO" id="GO:0008270">
    <property type="term" value="F:zinc ion binding"/>
    <property type="evidence" value="ECO:0007669"/>
    <property type="project" value="UniProtKB-UniRule"/>
</dbReference>
<dbReference type="GO" id="GO:0006351">
    <property type="term" value="P:DNA-templated transcription"/>
    <property type="evidence" value="ECO:0007669"/>
    <property type="project" value="UniProtKB-UniRule"/>
</dbReference>
<dbReference type="CDD" id="cd02655">
    <property type="entry name" value="RNAP_beta'_C"/>
    <property type="match status" value="1"/>
</dbReference>
<dbReference type="CDD" id="cd01609">
    <property type="entry name" value="RNAP_beta'_N"/>
    <property type="match status" value="1"/>
</dbReference>
<dbReference type="FunFam" id="1.10.132.30:FF:000003">
    <property type="entry name" value="DNA-directed RNA polymerase subunit beta"/>
    <property type="match status" value="1"/>
</dbReference>
<dbReference type="FunFam" id="1.10.40.90:FF:000001">
    <property type="entry name" value="DNA-directed RNA polymerase subunit beta"/>
    <property type="match status" value="1"/>
</dbReference>
<dbReference type="Gene3D" id="1.10.132.30">
    <property type="match status" value="1"/>
</dbReference>
<dbReference type="Gene3D" id="1.10.150.390">
    <property type="match status" value="1"/>
</dbReference>
<dbReference type="Gene3D" id="1.10.1790.20">
    <property type="match status" value="1"/>
</dbReference>
<dbReference type="Gene3D" id="1.10.40.90">
    <property type="match status" value="1"/>
</dbReference>
<dbReference type="Gene3D" id="2.40.40.20">
    <property type="match status" value="1"/>
</dbReference>
<dbReference type="Gene3D" id="2.40.50.100">
    <property type="match status" value="3"/>
</dbReference>
<dbReference type="Gene3D" id="4.10.860.120">
    <property type="entry name" value="RNA polymerase II, clamp domain"/>
    <property type="match status" value="1"/>
</dbReference>
<dbReference type="Gene3D" id="1.10.274.100">
    <property type="entry name" value="RNA polymerase Rpb1, domain 3"/>
    <property type="match status" value="2"/>
</dbReference>
<dbReference type="HAMAP" id="MF_01322">
    <property type="entry name" value="RNApol_bact_RpoC"/>
    <property type="match status" value="1"/>
</dbReference>
<dbReference type="InterPro" id="IPR045867">
    <property type="entry name" value="DNA-dir_RpoC_beta_prime"/>
</dbReference>
<dbReference type="InterPro" id="IPR012754">
    <property type="entry name" value="DNA-dir_RpoC_beta_prime_bact"/>
</dbReference>
<dbReference type="InterPro" id="IPR000722">
    <property type="entry name" value="RNA_pol_asu"/>
</dbReference>
<dbReference type="InterPro" id="IPR006592">
    <property type="entry name" value="RNA_pol_N"/>
</dbReference>
<dbReference type="InterPro" id="IPR007080">
    <property type="entry name" value="RNA_pol_Rpb1_1"/>
</dbReference>
<dbReference type="InterPro" id="IPR007066">
    <property type="entry name" value="RNA_pol_Rpb1_3"/>
</dbReference>
<dbReference type="InterPro" id="IPR042102">
    <property type="entry name" value="RNA_pol_Rpb1_3_sf"/>
</dbReference>
<dbReference type="InterPro" id="IPR007083">
    <property type="entry name" value="RNA_pol_Rpb1_4"/>
</dbReference>
<dbReference type="InterPro" id="IPR007081">
    <property type="entry name" value="RNA_pol_Rpb1_5"/>
</dbReference>
<dbReference type="InterPro" id="IPR044893">
    <property type="entry name" value="RNA_pol_Rpb1_clamp_domain"/>
</dbReference>
<dbReference type="InterPro" id="IPR038120">
    <property type="entry name" value="Rpb1_funnel_sf"/>
</dbReference>
<dbReference type="NCBIfam" id="TIGR02386">
    <property type="entry name" value="rpoC_TIGR"/>
    <property type="match status" value="1"/>
</dbReference>
<dbReference type="PANTHER" id="PTHR19376">
    <property type="entry name" value="DNA-DIRECTED RNA POLYMERASE"/>
    <property type="match status" value="1"/>
</dbReference>
<dbReference type="PANTHER" id="PTHR19376:SF54">
    <property type="entry name" value="DNA-DIRECTED RNA POLYMERASE SUBUNIT BETA"/>
    <property type="match status" value="1"/>
</dbReference>
<dbReference type="Pfam" id="PF04997">
    <property type="entry name" value="RNA_pol_Rpb1_1"/>
    <property type="match status" value="1"/>
</dbReference>
<dbReference type="Pfam" id="PF00623">
    <property type="entry name" value="RNA_pol_Rpb1_2"/>
    <property type="match status" value="2"/>
</dbReference>
<dbReference type="Pfam" id="PF04983">
    <property type="entry name" value="RNA_pol_Rpb1_3"/>
    <property type="match status" value="1"/>
</dbReference>
<dbReference type="Pfam" id="PF05000">
    <property type="entry name" value="RNA_pol_Rpb1_4"/>
    <property type="match status" value="1"/>
</dbReference>
<dbReference type="Pfam" id="PF04998">
    <property type="entry name" value="RNA_pol_Rpb1_5"/>
    <property type="match status" value="1"/>
</dbReference>
<dbReference type="SMART" id="SM00663">
    <property type="entry name" value="RPOLA_N"/>
    <property type="match status" value="1"/>
</dbReference>
<dbReference type="SUPFAM" id="SSF64484">
    <property type="entry name" value="beta and beta-prime subunits of DNA dependent RNA-polymerase"/>
    <property type="match status" value="1"/>
</dbReference>